<proteinExistence type="inferred from homology"/>
<sequence>MDTSSINAQSIFDDNAATLKLSWLTGHEGWERGFSADTVGNATSSADLVGHLNLIHPNRIQVLGEAEIDYYQRQTDEDRSRHMAELIALEPPFLVVAGGAAAPPELVLRCTRSSTPLFTTPMSAAAVIDSLRLYMSRILAPRATLHGVFLDILGMGVLLTGDSGLGKSELGLELISRGHGLVADDAVDFVRLGPDFVEGRCPPLLQNLLEVRGLGLLDIKTIFGETAVRRKMKLKLIVQLVRRPDGEFQRLPLESQTVDVLGLPISKVTIQVAAGRNLAVLVEAAVRNTILQLRGIDTLRDFMDRQRLAMQDPDSQFPGKLV</sequence>
<comment type="function">
    <text evidence="1">Catalyzes the ATP- as well as the pyrophosphate-dependent phosphorylation of a specific serine residue in HPr, a phosphocarrier protein of the phosphoenolpyruvate-dependent sugar phosphotransferase system (PTS). HprK/P also catalyzes the pyrophosphate-producing, inorganic phosphate-dependent dephosphorylation (phosphorolysis) of seryl-phosphorylated HPr (P-Ser-HPr).</text>
</comment>
<comment type="catalytic activity">
    <reaction evidence="1">
        <text>[HPr protein]-L-serine + ATP = [HPr protein]-O-phospho-L-serine + ADP + H(+)</text>
        <dbReference type="Rhea" id="RHEA:46600"/>
        <dbReference type="Rhea" id="RHEA-COMP:11602"/>
        <dbReference type="Rhea" id="RHEA-COMP:11603"/>
        <dbReference type="ChEBI" id="CHEBI:15378"/>
        <dbReference type="ChEBI" id="CHEBI:29999"/>
        <dbReference type="ChEBI" id="CHEBI:30616"/>
        <dbReference type="ChEBI" id="CHEBI:83421"/>
        <dbReference type="ChEBI" id="CHEBI:456216"/>
    </reaction>
</comment>
<comment type="catalytic activity">
    <reaction evidence="1">
        <text>[HPr protein]-O-phospho-L-serine + phosphate + H(+) = [HPr protein]-L-serine + diphosphate</text>
        <dbReference type="Rhea" id="RHEA:46604"/>
        <dbReference type="Rhea" id="RHEA-COMP:11602"/>
        <dbReference type="Rhea" id="RHEA-COMP:11603"/>
        <dbReference type="ChEBI" id="CHEBI:15378"/>
        <dbReference type="ChEBI" id="CHEBI:29999"/>
        <dbReference type="ChEBI" id="CHEBI:33019"/>
        <dbReference type="ChEBI" id="CHEBI:43474"/>
        <dbReference type="ChEBI" id="CHEBI:83421"/>
    </reaction>
</comment>
<comment type="cofactor">
    <cofactor evidence="1">
        <name>Mg(2+)</name>
        <dbReference type="ChEBI" id="CHEBI:18420"/>
    </cofactor>
</comment>
<comment type="subunit">
    <text evidence="1">Homohexamer.</text>
</comment>
<comment type="domain">
    <text evidence="1">The Walker A ATP-binding motif also binds Pi and PPi.</text>
</comment>
<comment type="miscellaneous">
    <text evidence="1">Both phosphorylation and phosphorolysis are carried out by the same active site and suggest a common mechanism for both reactions.</text>
</comment>
<comment type="similarity">
    <text evidence="1">Belongs to the HPrK/P family.</text>
</comment>
<dbReference type="EC" id="2.7.11.-" evidence="1"/>
<dbReference type="EC" id="2.7.4.-" evidence="1"/>
<dbReference type="EMBL" id="CP000614">
    <property type="protein sequence ID" value="ABO55890.1"/>
    <property type="molecule type" value="Genomic_DNA"/>
</dbReference>
<dbReference type="SMR" id="A4JHY7"/>
<dbReference type="KEGG" id="bvi:Bcep1808_2899"/>
<dbReference type="eggNOG" id="COG1493">
    <property type="taxonomic scope" value="Bacteria"/>
</dbReference>
<dbReference type="HOGENOM" id="CLU_052030_0_2_4"/>
<dbReference type="Proteomes" id="UP000002287">
    <property type="component" value="Chromosome 1"/>
</dbReference>
<dbReference type="GO" id="GO:0005524">
    <property type="term" value="F:ATP binding"/>
    <property type="evidence" value="ECO:0007669"/>
    <property type="project" value="UniProtKB-UniRule"/>
</dbReference>
<dbReference type="GO" id="GO:0000287">
    <property type="term" value="F:magnesium ion binding"/>
    <property type="evidence" value="ECO:0007669"/>
    <property type="project" value="UniProtKB-UniRule"/>
</dbReference>
<dbReference type="GO" id="GO:0000155">
    <property type="term" value="F:phosphorelay sensor kinase activity"/>
    <property type="evidence" value="ECO:0007669"/>
    <property type="project" value="InterPro"/>
</dbReference>
<dbReference type="GO" id="GO:0004674">
    <property type="term" value="F:protein serine/threonine kinase activity"/>
    <property type="evidence" value="ECO:0007669"/>
    <property type="project" value="UniProtKB-KW"/>
</dbReference>
<dbReference type="GO" id="GO:0004712">
    <property type="term" value="F:protein serine/threonine/tyrosine kinase activity"/>
    <property type="evidence" value="ECO:0007669"/>
    <property type="project" value="UniProtKB-UniRule"/>
</dbReference>
<dbReference type="GO" id="GO:0006109">
    <property type="term" value="P:regulation of carbohydrate metabolic process"/>
    <property type="evidence" value="ECO:0007669"/>
    <property type="project" value="UniProtKB-UniRule"/>
</dbReference>
<dbReference type="CDD" id="cd01918">
    <property type="entry name" value="HprK_C"/>
    <property type="match status" value="1"/>
</dbReference>
<dbReference type="FunFam" id="3.40.50.300:FF:000174">
    <property type="entry name" value="HPr kinase/phosphorylase"/>
    <property type="match status" value="1"/>
</dbReference>
<dbReference type="Gene3D" id="3.40.1390.20">
    <property type="entry name" value="HprK N-terminal domain-like"/>
    <property type="match status" value="1"/>
</dbReference>
<dbReference type="Gene3D" id="3.40.50.300">
    <property type="entry name" value="P-loop containing nucleotide triphosphate hydrolases"/>
    <property type="match status" value="1"/>
</dbReference>
<dbReference type="HAMAP" id="MF_01249">
    <property type="entry name" value="HPr_kinase"/>
    <property type="match status" value="1"/>
</dbReference>
<dbReference type="InterPro" id="IPR003755">
    <property type="entry name" value="HPr(Ser)_kin/Pase"/>
</dbReference>
<dbReference type="InterPro" id="IPR011104">
    <property type="entry name" value="Hpr_kin/Pase_C"/>
</dbReference>
<dbReference type="InterPro" id="IPR011126">
    <property type="entry name" value="Hpr_kin/Pase_Hpr_N"/>
</dbReference>
<dbReference type="InterPro" id="IPR027417">
    <property type="entry name" value="P-loop_NTPase"/>
</dbReference>
<dbReference type="InterPro" id="IPR028979">
    <property type="entry name" value="Ser_kin/Pase_Hpr-like_N_sf"/>
</dbReference>
<dbReference type="NCBIfam" id="TIGR00679">
    <property type="entry name" value="hpr-ser"/>
    <property type="match status" value="1"/>
</dbReference>
<dbReference type="PANTHER" id="PTHR30305:SF1">
    <property type="entry name" value="HPR KINASE_PHOSPHORYLASE"/>
    <property type="match status" value="1"/>
</dbReference>
<dbReference type="PANTHER" id="PTHR30305">
    <property type="entry name" value="PROTEIN YJDM-RELATED"/>
    <property type="match status" value="1"/>
</dbReference>
<dbReference type="Pfam" id="PF07475">
    <property type="entry name" value="Hpr_kinase_C"/>
    <property type="match status" value="1"/>
</dbReference>
<dbReference type="Pfam" id="PF02603">
    <property type="entry name" value="Hpr_kinase_N"/>
    <property type="match status" value="1"/>
</dbReference>
<dbReference type="SUPFAM" id="SSF75138">
    <property type="entry name" value="HprK N-terminal domain-like"/>
    <property type="match status" value="1"/>
</dbReference>
<dbReference type="SUPFAM" id="SSF53795">
    <property type="entry name" value="PEP carboxykinase-like"/>
    <property type="match status" value="1"/>
</dbReference>
<accession>A4JHY7</accession>
<reference key="1">
    <citation type="submission" date="2007-03" db="EMBL/GenBank/DDBJ databases">
        <title>Complete sequence of chromosome 1 of Burkholderia vietnamiensis G4.</title>
        <authorList>
            <consortium name="US DOE Joint Genome Institute"/>
            <person name="Copeland A."/>
            <person name="Lucas S."/>
            <person name="Lapidus A."/>
            <person name="Barry K."/>
            <person name="Detter J.C."/>
            <person name="Glavina del Rio T."/>
            <person name="Hammon N."/>
            <person name="Israni S."/>
            <person name="Dalin E."/>
            <person name="Tice H."/>
            <person name="Pitluck S."/>
            <person name="Chain P."/>
            <person name="Malfatti S."/>
            <person name="Shin M."/>
            <person name="Vergez L."/>
            <person name="Schmutz J."/>
            <person name="Larimer F."/>
            <person name="Land M."/>
            <person name="Hauser L."/>
            <person name="Kyrpides N."/>
            <person name="Tiedje J."/>
            <person name="Richardson P."/>
        </authorList>
    </citation>
    <scope>NUCLEOTIDE SEQUENCE [LARGE SCALE GENOMIC DNA]</scope>
    <source>
        <strain>G4 / LMG 22486</strain>
    </source>
</reference>
<gene>
    <name evidence="1" type="primary">hprK</name>
    <name type="ordered locus">Bcep1808_2899</name>
</gene>
<keyword id="KW-0067">ATP-binding</keyword>
<keyword id="KW-0418">Kinase</keyword>
<keyword id="KW-0460">Magnesium</keyword>
<keyword id="KW-0479">Metal-binding</keyword>
<keyword id="KW-0511">Multifunctional enzyme</keyword>
<keyword id="KW-0547">Nucleotide-binding</keyword>
<keyword id="KW-0723">Serine/threonine-protein kinase</keyword>
<keyword id="KW-0808">Transferase</keyword>
<name>HPRK_BURVG</name>
<evidence type="ECO:0000255" key="1">
    <source>
        <dbReference type="HAMAP-Rule" id="MF_01249"/>
    </source>
</evidence>
<feature type="chain" id="PRO_1000067140" description="HPr kinase/phosphorylase">
    <location>
        <begin position="1"/>
        <end position="322"/>
    </location>
</feature>
<feature type="region of interest" description="Important for the catalytic mechanism of both phosphorylation and dephosphorylation" evidence="1">
    <location>
        <begin position="209"/>
        <end position="218"/>
    </location>
</feature>
<feature type="region of interest" description="Important for the catalytic mechanism of dephosphorylation" evidence="1">
    <location>
        <begin position="271"/>
        <end position="276"/>
    </location>
</feature>
<feature type="active site" evidence="1">
    <location>
        <position position="146"/>
    </location>
</feature>
<feature type="active site" evidence="1">
    <location>
        <position position="167"/>
    </location>
</feature>
<feature type="active site" description="Proton acceptor; for phosphorylation activity. Proton donor; for dephosphorylation activity" evidence="1">
    <location>
        <position position="185"/>
    </location>
</feature>
<feature type="active site" evidence="1">
    <location>
        <position position="250"/>
    </location>
</feature>
<feature type="binding site" evidence="1">
    <location>
        <begin position="161"/>
        <end position="168"/>
    </location>
    <ligand>
        <name>ATP</name>
        <dbReference type="ChEBI" id="CHEBI:30616"/>
    </ligand>
</feature>
<feature type="binding site" evidence="1">
    <location>
        <position position="168"/>
    </location>
    <ligand>
        <name>Mg(2+)</name>
        <dbReference type="ChEBI" id="CHEBI:18420"/>
    </ligand>
</feature>
<feature type="binding site" evidence="1">
    <location>
        <position position="210"/>
    </location>
    <ligand>
        <name>Mg(2+)</name>
        <dbReference type="ChEBI" id="CHEBI:18420"/>
    </ligand>
</feature>
<protein>
    <recommendedName>
        <fullName evidence="1">HPr kinase/phosphorylase</fullName>
        <shortName evidence="1">HPrK/P</shortName>
        <ecNumber evidence="1">2.7.11.-</ecNumber>
        <ecNumber evidence="1">2.7.4.-</ecNumber>
    </recommendedName>
    <alternativeName>
        <fullName evidence="1">HPr(Ser) kinase/phosphorylase</fullName>
    </alternativeName>
</protein>
<organism>
    <name type="scientific">Burkholderia vietnamiensis (strain G4 / LMG 22486)</name>
    <name type="common">Burkholderia cepacia (strain R1808)</name>
    <dbReference type="NCBI Taxonomy" id="269482"/>
    <lineage>
        <taxon>Bacteria</taxon>
        <taxon>Pseudomonadati</taxon>
        <taxon>Pseudomonadota</taxon>
        <taxon>Betaproteobacteria</taxon>
        <taxon>Burkholderiales</taxon>
        <taxon>Burkholderiaceae</taxon>
        <taxon>Burkholderia</taxon>
        <taxon>Burkholderia cepacia complex</taxon>
    </lineage>
</organism>